<evidence type="ECO:0000255" key="1">
    <source>
        <dbReference type="PROSITE-ProRule" id="PRU00238"/>
    </source>
</evidence>
<name>HBAD_DRYME</name>
<organism>
    <name type="scientific">Drymarchon melanurus erebennus</name>
    <name type="common">Texas indigo snake</name>
    <name type="synonym">Drymarchon corais erebennus</name>
    <dbReference type="NCBI Taxonomy" id="358746"/>
    <lineage>
        <taxon>Eukaryota</taxon>
        <taxon>Metazoa</taxon>
        <taxon>Chordata</taxon>
        <taxon>Craniata</taxon>
        <taxon>Vertebrata</taxon>
        <taxon>Euteleostomi</taxon>
        <taxon>Lepidosauria</taxon>
        <taxon>Squamata</taxon>
        <taxon>Bifurcata</taxon>
        <taxon>Unidentata</taxon>
        <taxon>Episquamata</taxon>
        <taxon>Toxicofera</taxon>
        <taxon>Serpentes</taxon>
        <taxon>Colubroidea</taxon>
        <taxon>Colubridae</taxon>
        <taxon>Colubrinae</taxon>
        <taxon>Drymarchon</taxon>
    </lineage>
</organism>
<comment type="function">
    <text>Involved in oxygen transport from the lung to the various peripheral tissues.</text>
</comment>
<comment type="subunit">
    <text>Heterotetramer of two alpha chains and two beta chains.</text>
</comment>
<comment type="tissue specificity">
    <text>Red blood cells.</text>
</comment>
<comment type="similarity">
    <text evidence="1">Belongs to the globin family.</text>
</comment>
<feature type="chain" id="PRO_0000052827" description="Hemoglobin subunit alpha-D">
    <location>
        <begin position="1"/>
        <end position="141"/>
    </location>
</feature>
<feature type="domain" description="Globin" evidence="1">
    <location>
        <begin position="1"/>
        <end position="141"/>
    </location>
</feature>
<feature type="binding site" description="distal binding residue" evidence="1">
    <location>
        <position position="58"/>
    </location>
    <ligand>
        <name>heme b</name>
        <dbReference type="ChEBI" id="CHEBI:60344"/>
    </ligand>
    <ligandPart>
        <name>Fe</name>
        <dbReference type="ChEBI" id="CHEBI:18248"/>
    </ligandPart>
</feature>
<feature type="binding site" description="proximal binding residue" evidence="1">
    <location>
        <position position="87"/>
    </location>
    <ligand>
        <name>heme b</name>
        <dbReference type="ChEBI" id="CHEBI:60344"/>
    </ligand>
    <ligandPart>
        <name>Fe</name>
        <dbReference type="ChEBI" id="CHEBI:18248"/>
    </ligandPart>
</feature>
<keyword id="KW-0903">Direct protein sequencing</keyword>
<keyword id="KW-0349">Heme</keyword>
<keyword id="KW-0408">Iron</keyword>
<keyword id="KW-0479">Metal-binding</keyword>
<keyword id="KW-0561">Oxygen transport</keyword>
<keyword id="KW-0813">Transport</keyword>
<protein>
    <recommendedName>
        <fullName>Hemoglobin subunit alpha-D</fullName>
    </recommendedName>
    <alternativeName>
        <fullName>Alpha-D-globin</fullName>
    </alternativeName>
    <alternativeName>
        <fullName>Hemoglobin alpha-D chain</fullName>
    </alternativeName>
</protein>
<reference key="1">
    <citation type="journal article" date="2002" name="Biol. Chem.">
        <title>The primary structure of three hemoglobin chains from the indigo snake (Drymarchon corais erebennus, Serpentes): first evidence for alphaD chains and two beta chain types in snakes.</title>
        <authorList>
            <person name="Stoeckelhuber M."/>
            <person name="Gorr T."/>
            <person name="Kleinschmidt T."/>
        </authorList>
    </citation>
    <scope>PROTEIN SEQUENCE</scope>
</reference>
<proteinExistence type="evidence at protein level"/>
<accession>P0C0U7</accession>
<sequence length="141" mass="15821">VLTAEDRRLLQASVGKLGCRLEDIGADALNRLLIVFPQSKTYFSHFNLSPGSKDIVHQGEKVGKALDSALKHLDDIRGTLSQLSDLHAYNLRVDPVNFQLLSKCLHVSLATHLRNEYNASTCLAWDKFLEQVADVLCEKYR</sequence>
<dbReference type="SMR" id="P0C0U7"/>
<dbReference type="GO" id="GO:0072562">
    <property type="term" value="C:blood microparticle"/>
    <property type="evidence" value="ECO:0007669"/>
    <property type="project" value="TreeGrafter"/>
</dbReference>
<dbReference type="GO" id="GO:0031838">
    <property type="term" value="C:haptoglobin-hemoglobin complex"/>
    <property type="evidence" value="ECO:0007669"/>
    <property type="project" value="TreeGrafter"/>
</dbReference>
<dbReference type="GO" id="GO:0005833">
    <property type="term" value="C:hemoglobin complex"/>
    <property type="evidence" value="ECO:0007669"/>
    <property type="project" value="InterPro"/>
</dbReference>
<dbReference type="GO" id="GO:0031720">
    <property type="term" value="F:haptoglobin binding"/>
    <property type="evidence" value="ECO:0007669"/>
    <property type="project" value="TreeGrafter"/>
</dbReference>
<dbReference type="GO" id="GO:0020037">
    <property type="term" value="F:heme binding"/>
    <property type="evidence" value="ECO:0007669"/>
    <property type="project" value="InterPro"/>
</dbReference>
<dbReference type="GO" id="GO:0046872">
    <property type="term" value="F:metal ion binding"/>
    <property type="evidence" value="ECO:0007669"/>
    <property type="project" value="UniProtKB-KW"/>
</dbReference>
<dbReference type="GO" id="GO:0043177">
    <property type="term" value="F:organic acid binding"/>
    <property type="evidence" value="ECO:0007669"/>
    <property type="project" value="TreeGrafter"/>
</dbReference>
<dbReference type="GO" id="GO:0019825">
    <property type="term" value="F:oxygen binding"/>
    <property type="evidence" value="ECO:0007669"/>
    <property type="project" value="InterPro"/>
</dbReference>
<dbReference type="GO" id="GO:0005344">
    <property type="term" value="F:oxygen carrier activity"/>
    <property type="evidence" value="ECO:0007669"/>
    <property type="project" value="UniProtKB-KW"/>
</dbReference>
<dbReference type="GO" id="GO:0004601">
    <property type="term" value="F:peroxidase activity"/>
    <property type="evidence" value="ECO:0007669"/>
    <property type="project" value="TreeGrafter"/>
</dbReference>
<dbReference type="GO" id="GO:0042744">
    <property type="term" value="P:hydrogen peroxide catabolic process"/>
    <property type="evidence" value="ECO:0007669"/>
    <property type="project" value="TreeGrafter"/>
</dbReference>
<dbReference type="CDD" id="cd08927">
    <property type="entry name" value="Hb-alpha-like"/>
    <property type="match status" value="1"/>
</dbReference>
<dbReference type="FunFam" id="1.10.490.10:FF:000002">
    <property type="entry name" value="Hemoglobin subunit alpha"/>
    <property type="match status" value="1"/>
</dbReference>
<dbReference type="Gene3D" id="1.10.490.10">
    <property type="entry name" value="Globins"/>
    <property type="match status" value="1"/>
</dbReference>
<dbReference type="InterPro" id="IPR000971">
    <property type="entry name" value="Globin"/>
</dbReference>
<dbReference type="InterPro" id="IPR009050">
    <property type="entry name" value="Globin-like_sf"/>
</dbReference>
<dbReference type="InterPro" id="IPR012292">
    <property type="entry name" value="Globin/Proto"/>
</dbReference>
<dbReference type="InterPro" id="IPR002338">
    <property type="entry name" value="Hemoglobin_a-typ"/>
</dbReference>
<dbReference type="InterPro" id="IPR050056">
    <property type="entry name" value="Hemoglobin_oxygen_transport"/>
</dbReference>
<dbReference type="PANTHER" id="PTHR11442">
    <property type="entry name" value="HEMOGLOBIN FAMILY MEMBER"/>
    <property type="match status" value="1"/>
</dbReference>
<dbReference type="PANTHER" id="PTHR11442:SF48">
    <property type="entry name" value="HEMOGLOBIN SUBUNIT ALPHA"/>
    <property type="match status" value="1"/>
</dbReference>
<dbReference type="Pfam" id="PF00042">
    <property type="entry name" value="Globin"/>
    <property type="match status" value="1"/>
</dbReference>
<dbReference type="PRINTS" id="PR00612">
    <property type="entry name" value="ALPHAHAEM"/>
</dbReference>
<dbReference type="SUPFAM" id="SSF46458">
    <property type="entry name" value="Globin-like"/>
    <property type="match status" value="1"/>
</dbReference>
<dbReference type="PROSITE" id="PS01033">
    <property type="entry name" value="GLOBIN"/>
    <property type="match status" value="1"/>
</dbReference>